<name>DNAJ_ESCF3</name>
<reference key="1">
    <citation type="journal article" date="2009" name="PLoS Genet.">
        <title>Organised genome dynamics in the Escherichia coli species results in highly diverse adaptive paths.</title>
        <authorList>
            <person name="Touchon M."/>
            <person name="Hoede C."/>
            <person name="Tenaillon O."/>
            <person name="Barbe V."/>
            <person name="Baeriswyl S."/>
            <person name="Bidet P."/>
            <person name="Bingen E."/>
            <person name="Bonacorsi S."/>
            <person name="Bouchier C."/>
            <person name="Bouvet O."/>
            <person name="Calteau A."/>
            <person name="Chiapello H."/>
            <person name="Clermont O."/>
            <person name="Cruveiller S."/>
            <person name="Danchin A."/>
            <person name="Diard M."/>
            <person name="Dossat C."/>
            <person name="Karoui M.E."/>
            <person name="Frapy E."/>
            <person name="Garry L."/>
            <person name="Ghigo J.M."/>
            <person name="Gilles A.M."/>
            <person name="Johnson J."/>
            <person name="Le Bouguenec C."/>
            <person name="Lescat M."/>
            <person name="Mangenot S."/>
            <person name="Martinez-Jehanne V."/>
            <person name="Matic I."/>
            <person name="Nassif X."/>
            <person name="Oztas S."/>
            <person name="Petit M.A."/>
            <person name="Pichon C."/>
            <person name="Rouy Z."/>
            <person name="Ruf C.S."/>
            <person name="Schneider D."/>
            <person name="Tourret J."/>
            <person name="Vacherie B."/>
            <person name="Vallenet D."/>
            <person name="Medigue C."/>
            <person name="Rocha E.P.C."/>
            <person name="Denamur E."/>
        </authorList>
    </citation>
    <scope>NUCLEOTIDE SEQUENCE [LARGE SCALE GENOMIC DNA]</scope>
    <source>
        <strain>ATCC 35469 / DSM 13698 / BCRC 15582 / CCUG 18766 / IAM 14443 / JCM 21226 / LMG 7866 / NBRC 102419 / NCTC 12128 / CDC 0568-73</strain>
    </source>
</reference>
<comment type="function">
    <text evidence="1">Participates actively in the response to hyperosmotic and heat shock by preventing the aggregation of stress-denatured proteins and by disaggregating proteins, also in an autonomous, DnaK-independent fashion. Unfolded proteins bind initially to DnaJ; upon interaction with the DnaJ-bound protein, DnaK hydrolyzes its bound ATP, resulting in the formation of a stable complex. GrpE releases ADP from DnaK; ATP binding to DnaK triggers the release of the substrate protein, thus completing the reaction cycle. Several rounds of ATP-dependent interactions between DnaJ, DnaK and GrpE are required for fully efficient folding. Also involved, together with DnaK and GrpE, in the DNA replication of plasmids through activation of initiation proteins.</text>
</comment>
<comment type="cofactor">
    <cofactor evidence="1">
        <name>Zn(2+)</name>
        <dbReference type="ChEBI" id="CHEBI:29105"/>
    </cofactor>
    <text evidence="1">Binds 2 Zn(2+) ions per monomer.</text>
</comment>
<comment type="subunit">
    <text evidence="1">Homodimer.</text>
</comment>
<comment type="subcellular location">
    <subcellularLocation>
        <location evidence="1">Cytoplasm</location>
    </subcellularLocation>
</comment>
<comment type="domain">
    <text evidence="1">The J domain is necessary and sufficient to stimulate DnaK ATPase activity. Zinc center 1 plays an important role in the autonomous, DnaK-independent chaperone activity of DnaJ. Zinc center 2 is essential for interaction with DnaK and for DnaJ activity.</text>
</comment>
<comment type="similarity">
    <text evidence="1">Belongs to the DnaJ family.</text>
</comment>
<accession>B7LVP7</accession>
<protein>
    <recommendedName>
        <fullName evidence="1">Chaperone protein DnaJ</fullName>
    </recommendedName>
</protein>
<proteinExistence type="inferred from homology"/>
<dbReference type="EMBL" id="CU928158">
    <property type="protein sequence ID" value="CAQ87599.1"/>
    <property type="molecule type" value="Genomic_DNA"/>
</dbReference>
<dbReference type="RefSeq" id="WP_001118464.1">
    <property type="nucleotide sequence ID" value="NC_011740.1"/>
</dbReference>
<dbReference type="SMR" id="B7LVP7"/>
<dbReference type="GeneID" id="93777428"/>
<dbReference type="KEGG" id="efe:EFER_0011"/>
<dbReference type="HOGENOM" id="CLU_017633_0_7_6"/>
<dbReference type="OrthoDB" id="9779889at2"/>
<dbReference type="Proteomes" id="UP000000745">
    <property type="component" value="Chromosome"/>
</dbReference>
<dbReference type="GO" id="GO:0005737">
    <property type="term" value="C:cytoplasm"/>
    <property type="evidence" value="ECO:0007669"/>
    <property type="project" value="UniProtKB-SubCell"/>
</dbReference>
<dbReference type="GO" id="GO:0005524">
    <property type="term" value="F:ATP binding"/>
    <property type="evidence" value="ECO:0007669"/>
    <property type="project" value="InterPro"/>
</dbReference>
<dbReference type="GO" id="GO:0031072">
    <property type="term" value="F:heat shock protein binding"/>
    <property type="evidence" value="ECO:0007669"/>
    <property type="project" value="InterPro"/>
</dbReference>
<dbReference type="GO" id="GO:0051082">
    <property type="term" value="F:unfolded protein binding"/>
    <property type="evidence" value="ECO:0007669"/>
    <property type="project" value="UniProtKB-UniRule"/>
</dbReference>
<dbReference type="GO" id="GO:0008270">
    <property type="term" value="F:zinc ion binding"/>
    <property type="evidence" value="ECO:0007669"/>
    <property type="project" value="UniProtKB-UniRule"/>
</dbReference>
<dbReference type="GO" id="GO:0051085">
    <property type="term" value="P:chaperone cofactor-dependent protein refolding"/>
    <property type="evidence" value="ECO:0007669"/>
    <property type="project" value="TreeGrafter"/>
</dbReference>
<dbReference type="GO" id="GO:0006260">
    <property type="term" value="P:DNA replication"/>
    <property type="evidence" value="ECO:0007669"/>
    <property type="project" value="UniProtKB-KW"/>
</dbReference>
<dbReference type="GO" id="GO:0042026">
    <property type="term" value="P:protein refolding"/>
    <property type="evidence" value="ECO:0007669"/>
    <property type="project" value="TreeGrafter"/>
</dbReference>
<dbReference type="GO" id="GO:0009408">
    <property type="term" value="P:response to heat"/>
    <property type="evidence" value="ECO:0007669"/>
    <property type="project" value="InterPro"/>
</dbReference>
<dbReference type="CDD" id="cd06257">
    <property type="entry name" value="DnaJ"/>
    <property type="match status" value="1"/>
</dbReference>
<dbReference type="CDD" id="cd10747">
    <property type="entry name" value="DnaJ_C"/>
    <property type="match status" value="1"/>
</dbReference>
<dbReference type="CDD" id="cd10719">
    <property type="entry name" value="DnaJ_zf"/>
    <property type="match status" value="1"/>
</dbReference>
<dbReference type="FunFam" id="1.10.287.110:FF:000003">
    <property type="entry name" value="Molecular chaperone DnaJ"/>
    <property type="match status" value="1"/>
</dbReference>
<dbReference type="FunFam" id="2.10.230.10:FF:000002">
    <property type="entry name" value="Molecular chaperone DnaJ"/>
    <property type="match status" value="1"/>
</dbReference>
<dbReference type="FunFam" id="2.60.260.20:FF:000004">
    <property type="entry name" value="Molecular chaperone DnaJ"/>
    <property type="match status" value="1"/>
</dbReference>
<dbReference type="Gene3D" id="1.10.287.110">
    <property type="entry name" value="DnaJ domain"/>
    <property type="match status" value="1"/>
</dbReference>
<dbReference type="Gene3D" id="2.10.230.10">
    <property type="entry name" value="Heat shock protein DnaJ, cysteine-rich domain"/>
    <property type="match status" value="1"/>
</dbReference>
<dbReference type="Gene3D" id="2.60.260.20">
    <property type="entry name" value="Urease metallochaperone UreE, N-terminal domain"/>
    <property type="match status" value="2"/>
</dbReference>
<dbReference type="HAMAP" id="MF_01152">
    <property type="entry name" value="DnaJ"/>
    <property type="match status" value="1"/>
</dbReference>
<dbReference type="InterPro" id="IPR012724">
    <property type="entry name" value="DnaJ"/>
</dbReference>
<dbReference type="InterPro" id="IPR002939">
    <property type="entry name" value="DnaJ_C"/>
</dbReference>
<dbReference type="InterPro" id="IPR001623">
    <property type="entry name" value="DnaJ_domain"/>
</dbReference>
<dbReference type="InterPro" id="IPR018253">
    <property type="entry name" value="DnaJ_domain_CS"/>
</dbReference>
<dbReference type="InterPro" id="IPR008971">
    <property type="entry name" value="HSP40/DnaJ_pept-bd"/>
</dbReference>
<dbReference type="InterPro" id="IPR001305">
    <property type="entry name" value="HSP_DnaJ_Cys-rich_dom"/>
</dbReference>
<dbReference type="InterPro" id="IPR036410">
    <property type="entry name" value="HSP_DnaJ_Cys-rich_dom_sf"/>
</dbReference>
<dbReference type="InterPro" id="IPR036869">
    <property type="entry name" value="J_dom_sf"/>
</dbReference>
<dbReference type="NCBIfam" id="TIGR02349">
    <property type="entry name" value="DnaJ_bact"/>
    <property type="match status" value="1"/>
</dbReference>
<dbReference type="NCBIfam" id="NF008035">
    <property type="entry name" value="PRK10767.1"/>
    <property type="match status" value="1"/>
</dbReference>
<dbReference type="PANTHER" id="PTHR43096:SF48">
    <property type="entry name" value="CHAPERONE PROTEIN DNAJ"/>
    <property type="match status" value="1"/>
</dbReference>
<dbReference type="PANTHER" id="PTHR43096">
    <property type="entry name" value="DNAJ HOMOLOG 1, MITOCHONDRIAL-RELATED"/>
    <property type="match status" value="1"/>
</dbReference>
<dbReference type="Pfam" id="PF00226">
    <property type="entry name" value="DnaJ"/>
    <property type="match status" value="1"/>
</dbReference>
<dbReference type="Pfam" id="PF01556">
    <property type="entry name" value="DnaJ_C"/>
    <property type="match status" value="1"/>
</dbReference>
<dbReference type="Pfam" id="PF00684">
    <property type="entry name" value="DnaJ_CXXCXGXG"/>
    <property type="match status" value="1"/>
</dbReference>
<dbReference type="PRINTS" id="PR00625">
    <property type="entry name" value="JDOMAIN"/>
</dbReference>
<dbReference type="SMART" id="SM00271">
    <property type="entry name" value="DnaJ"/>
    <property type="match status" value="1"/>
</dbReference>
<dbReference type="SUPFAM" id="SSF46565">
    <property type="entry name" value="Chaperone J-domain"/>
    <property type="match status" value="1"/>
</dbReference>
<dbReference type="SUPFAM" id="SSF57938">
    <property type="entry name" value="DnaJ/Hsp40 cysteine-rich domain"/>
    <property type="match status" value="1"/>
</dbReference>
<dbReference type="SUPFAM" id="SSF49493">
    <property type="entry name" value="HSP40/DnaJ peptide-binding domain"/>
    <property type="match status" value="2"/>
</dbReference>
<dbReference type="PROSITE" id="PS00636">
    <property type="entry name" value="DNAJ_1"/>
    <property type="match status" value="1"/>
</dbReference>
<dbReference type="PROSITE" id="PS50076">
    <property type="entry name" value="DNAJ_2"/>
    <property type="match status" value="1"/>
</dbReference>
<dbReference type="PROSITE" id="PS51188">
    <property type="entry name" value="ZF_CR"/>
    <property type="match status" value="1"/>
</dbReference>
<sequence>MAKQDYYEILGVSKTAEEREIKKAYKRLAMKYHPDRNQGDKEAEAKFKEIKEAYEVLTDSQKRAAYDQYGHAAFEQGGMGGGGFGGGADFSDIFGDVFGDIFGGGRGRQRAARGADLRYNMELTLEEAVRGVTKEIRIPTLEECDVCHGSGAKPGTQPQTCPTCHGSGQVQMRQGFFAVQQTCPHCQGRGTLIKDPCNKCHGHGRVERSKTLSVKIPAGVDTGDRIRLAGEGEAGEHGAPAGDLYVQVQVKQHPIFEREGNNLYCEVPINFAMAALGGEIEVPTLDGRVKLKVPGETQTGKLFRMRGKGVKSVRGGAQGDLLCRVVVETPVGLNEKQKQLLQELQESFGGPTGEHNSPRSKSFFDGVKKFFDDLTR</sequence>
<gene>
    <name evidence="1" type="primary">dnaJ</name>
    <name type="ordered locus">EFER_0011</name>
</gene>
<evidence type="ECO:0000255" key="1">
    <source>
        <dbReference type="HAMAP-Rule" id="MF_01152"/>
    </source>
</evidence>
<organism>
    <name type="scientific">Escherichia fergusonii (strain ATCC 35469 / DSM 13698 / CCUG 18766 / IAM 14443 / JCM 21226 / LMG 7866 / NBRC 102419 / NCTC 12128 / CDC 0568-73)</name>
    <dbReference type="NCBI Taxonomy" id="585054"/>
    <lineage>
        <taxon>Bacteria</taxon>
        <taxon>Pseudomonadati</taxon>
        <taxon>Pseudomonadota</taxon>
        <taxon>Gammaproteobacteria</taxon>
        <taxon>Enterobacterales</taxon>
        <taxon>Enterobacteriaceae</taxon>
        <taxon>Escherichia</taxon>
    </lineage>
</organism>
<feature type="chain" id="PRO_1000137691" description="Chaperone protein DnaJ">
    <location>
        <begin position="1"/>
        <end position="376"/>
    </location>
</feature>
<feature type="domain" description="J" evidence="1">
    <location>
        <begin position="5"/>
        <end position="70"/>
    </location>
</feature>
<feature type="repeat" description="CXXCXGXG motif">
    <location>
        <begin position="144"/>
        <end position="151"/>
    </location>
</feature>
<feature type="repeat" description="CXXCXGXG motif">
    <location>
        <begin position="161"/>
        <end position="168"/>
    </location>
</feature>
<feature type="repeat" description="CXXCXGXG motif">
    <location>
        <begin position="183"/>
        <end position="190"/>
    </location>
</feature>
<feature type="repeat" description="CXXCXGXG motif">
    <location>
        <begin position="197"/>
        <end position="204"/>
    </location>
</feature>
<feature type="zinc finger region" description="CR-type" evidence="1">
    <location>
        <begin position="131"/>
        <end position="209"/>
    </location>
</feature>
<feature type="binding site" evidence="1">
    <location>
        <position position="144"/>
    </location>
    <ligand>
        <name>Zn(2+)</name>
        <dbReference type="ChEBI" id="CHEBI:29105"/>
        <label>1</label>
    </ligand>
</feature>
<feature type="binding site" evidence="1">
    <location>
        <position position="147"/>
    </location>
    <ligand>
        <name>Zn(2+)</name>
        <dbReference type="ChEBI" id="CHEBI:29105"/>
        <label>1</label>
    </ligand>
</feature>
<feature type="binding site" evidence="1">
    <location>
        <position position="161"/>
    </location>
    <ligand>
        <name>Zn(2+)</name>
        <dbReference type="ChEBI" id="CHEBI:29105"/>
        <label>2</label>
    </ligand>
</feature>
<feature type="binding site" evidence="1">
    <location>
        <position position="164"/>
    </location>
    <ligand>
        <name>Zn(2+)</name>
        <dbReference type="ChEBI" id="CHEBI:29105"/>
        <label>2</label>
    </ligand>
</feature>
<feature type="binding site" evidence="1">
    <location>
        <position position="183"/>
    </location>
    <ligand>
        <name>Zn(2+)</name>
        <dbReference type="ChEBI" id="CHEBI:29105"/>
        <label>2</label>
    </ligand>
</feature>
<feature type="binding site" evidence="1">
    <location>
        <position position="186"/>
    </location>
    <ligand>
        <name>Zn(2+)</name>
        <dbReference type="ChEBI" id="CHEBI:29105"/>
        <label>2</label>
    </ligand>
</feature>
<feature type="binding site" evidence="1">
    <location>
        <position position="197"/>
    </location>
    <ligand>
        <name>Zn(2+)</name>
        <dbReference type="ChEBI" id="CHEBI:29105"/>
        <label>1</label>
    </ligand>
</feature>
<feature type="binding site" evidence="1">
    <location>
        <position position="200"/>
    </location>
    <ligand>
        <name>Zn(2+)</name>
        <dbReference type="ChEBI" id="CHEBI:29105"/>
        <label>1</label>
    </ligand>
</feature>
<keyword id="KW-0143">Chaperone</keyword>
<keyword id="KW-0963">Cytoplasm</keyword>
<keyword id="KW-0235">DNA replication</keyword>
<keyword id="KW-0479">Metal-binding</keyword>
<keyword id="KW-0677">Repeat</keyword>
<keyword id="KW-0346">Stress response</keyword>
<keyword id="KW-0862">Zinc</keyword>
<keyword id="KW-0863">Zinc-finger</keyword>